<proteinExistence type="evidence at transcript level"/>
<gene>
    <name type="primary">SCPL1</name>
    <name type="ordered locus">At5g36180</name>
    <name type="ORF">MAB16.13</name>
</gene>
<comment type="function">
    <text evidence="1">Probable carboxypeptidase.</text>
</comment>
<comment type="subcellular location">
    <subcellularLocation>
        <location evidence="4">Secreted</location>
    </subcellularLocation>
</comment>
<comment type="tissue specificity">
    <text evidence="3">Expressed in seedlings and roots.</text>
</comment>
<comment type="similarity">
    <text evidence="4">Belongs to the peptidase S10 family.</text>
</comment>
<comment type="sequence caution" evidence="4">
    <conflict type="erroneous gene model prediction">
        <sequence resource="EMBL-CDS" id="BAA96893"/>
    </conflict>
</comment>
<evidence type="ECO:0000250" key="1"/>
<evidence type="ECO:0000255" key="2"/>
<evidence type="ECO:0000269" key="3">
    <source>
    </source>
</evidence>
<evidence type="ECO:0000305" key="4"/>
<name>SCP1_ARATH</name>
<sequence>MANKYVSSVLKSLLVLLHLVFLSKQHVDSASIVKSLPGFEGQLPFELETGYIGVGEEEEVQLFYYFIKSERNPKEDPLILWLTGGPGCSAISGLLFENGPLTMKLDVYNGTLPSLVSTTYSWTKTSSIIFLDQPVGTGFSYSRTQQFNKPSDSGEAKRIHEFLQKWLGKHQVFSSNPFYVAGDSYSGLVVPATVQEISKGNYECCNPPINLQGYVLGNPLTDYTTGSNSRIPFAHGMALISDELYESLKKTCKGEYTNVHPRNTQCLKFVEEFNKCTNRIFQQLILDPLCETETPDCYIYRYLLTTYWANDATVREALQINKESIGEWVRCYYSIPYNNDIKSSMPYHVNNSISGYRSLIYSGDHDFEVPYLGTQAWIRSLNYSIIDDWRPWMVKNQIAGYTRTYANKMTFATIKGGGHTAESKPEEASIMFQRWINGQPL</sequence>
<reference key="1">
    <citation type="journal article" date="2000" name="DNA Res.">
        <title>Structural analysis of Arabidopsis thaliana chromosome 5. X. Sequence features of the regions of 3,076,755 bp covered by sixty P1 and TAC clones.</title>
        <authorList>
            <person name="Sato S."/>
            <person name="Nakamura Y."/>
            <person name="Kaneko T."/>
            <person name="Katoh T."/>
            <person name="Asamizu E."/>
            <person name="Kotani H."/>
            <person name="Tabata S."/>
        </authorList>
    </citation>
    <scope>NUCLEOTIDE SEQUENCE [LARGE SCALE GENOMIC DNA]</scope>
    <source>
        <strain>cv. Columbia</strain>
    </source>
</reference>
<reference key="2">
    <citation type="journal article" date="2017" name="Plant J.">
        <title>Araport11: a complete reannotation of the Arabidopsis thaliana reference genome.</title>
        <authorList>
            <person name="Cheng C.Y."/>
            <person name="Krishnakumar V."/>
            <person name="Chan A.P."/>
            <person name="Thibaud-Nissen F."/>
            <person name="Schobel S."/>
            <person name="Town C.D."/>
        </authorList>
    </citation>
    <scope>GENOME REANNOTATION</scope>
    <source>
        <strain>cv. Columbia</strain>
    </source>
</reference>
<reference key="3">
    <citation type="journal article" date="2003" name="Science">
        <title>Empirical analysis of transcriptional activity in the Arabidopsis genome.</title>
        <authorList>
            <person name="Yamada K."/>
            <person name="Lim J."/>
            <person name="Dale J.M."/>
            <person name="Chen H."/>
            <person name="Shinn P."/>
            <person name="Palm C.J."/>
            <person name="Southwick A.M."/>
            <person name="Wu H.C."/>
            <person name="Kim C.J."/>
            <person name="Nguyen M."/>
            <person name="Pham P.K."/>
            <person name="Cheuk R.F."/>
            <person name="Karlin-Newmann G."/>
            <person name="Liu S.X."/>
            <person name="Lam B."/>
            <person name="Sakano H."/>
            <person name="Wu T."/>
            <person name="Yu G."/>
            <person name="Miranda M."/>
            <person name="Quach H.L."/>
            <person name="Tripp M."/>
            <person name="Chang C.H."/>
            <person name="Lee J.M."/>
            <person name="Toriumi M.J."/>
            <person name="Chan M.M."/>
            <person name="Tang C.C."/>
            <person name="Onodera C.S."/>
            <person name="Deng J.M."/>
            <person name="Akiyama K."/>
            <person name="Ansari Y."/>
            <person name="Arakawa T."/>
            <person name="Banh J."/>
            <person name="Banno F."/>
            <person name="Bowser L."/>
            <person name="Brooks S.Y."/>
            <person name="Carninci P."/>
            <person name="Chao Q."/>
            <person name="Choy N."/>
            <person name="Enju A."/>
            <person name="Goldsmith A.D."/>
            <person name="Gurjal M."/>
            <person name="Hansen N.F."/>
            <person name="Hayashizaki Y."/>
            <person name="Johnson-Hopson C."/>
            <person name="Hsuan V.W."/>
            <person name="Iida K."/>
            <person name="Karnes M."/>
            <person name="Khan S."/>
            <person name="Koesema E."/>
            <person name="Ishida J."/>
            <person name="Jiang P.X."/>
            <person name="Jones T."/>
            <person name="Kawai J."/>
            <person name="Kamiya A."/>
            <person name="Meyers C."/>
            <person name="Nakajima M."/>
            <person name="Narusaka M."/>
            <person name="Seki M."/>
            <person name="Sakurai T."/>
            <person name="Satou M."/>
            <person name="Tamse R."/>
            <person name="Vaysberg M."/>
            <person name="Wallender E.K."/>
            <person name="Wong C."/>
            <person name="Yamamura Y."/>
            <person name="Yuan S."/>
            <person name="Shinozaki K."/>
            <person name="Davis R.W."/>
            <person name="Theologis A."/>
            <person name="Ecker J.R."/>
        </authorList>
    </citation>
    <scope>NUCLEOTIDE SEQUENCE [LARGE SCALE MRNA]</scope>
    <source>
        <strain>cv. Columbia</strain>
    </source>
</reference>
<reference key="4">
    <citation type="journal article" date="2005" name="Plant Physiol.">
        <title>An expression and bioinformatics analysis of the Arabidopsis serine carboxypeptidase-like gene family.</title>
        <authorList>
            <person name="Fraser C.M."/>
            <person name="Rider L.W."/>
            <person name="Chapple C."/>
        </authorList>
    </citation>
    <scope>GENE FAMILY</scope>
    <scope>TISSUE SPECIFICITY</scope>
    <scope>NOMENCLATURE</scope>
</reference>
<organism>
    <name type="scientific">Arabidopsis thaliana</name>
    <name type="common">Mouse-ear cress</name>
    <dbReference type="NCBI Taxonomy" id="3702"/>
    <lineage>
        <taxon>Eukaryota</taxon>
        <taxon>Viridiplantae</taxon>
        <taxon>Streptophyta</taxon>
        <taxon>Embryophyta</taxon>
        <taxon>Tracheophyta</taxon>
        <taxon>Spermatophyta</taxon>
        <taxon>Magnoliopsida</taxon>
        <taxon>eudicotyledons</taxon>
        <taxon>Gunneridae</taxon>
        <taxon>Pentapetalae</taxon>
        <taxon>rosids</taxon>
        <taxon>malvids</taxon>
        <taxon>Brassicales</taxon>
        <taxon>Brassicaceae</taxon>
        <taxon>Camelineae</taxon>
        <taxon>Arabidopsis</taxon>
    </lineage>
</organism>
<protein>
    <recommendedName>
        <fullName>Serine carboxypeptidase-like 1</fullName>
        <ecNumber>3.4.16.-</ecNumber>
    </recommendedName>
</protein>
<dbReference type="EC" id="3.4.16.-"/>
<dbReference type="EMBL" id="AB018112">
    <property type="protein sequence ID" value="BAA96893.1"/>
    <property type="status" value="ALT_SEQ"/>
    <property type="molecule type" value="Genomic_DNA"/>
</dbReference>
<dbReference type="EMBL" id="CP002688">
    <property type="protein sequence ID" value="AED94054.1"/>
    <property type="molecule type" value="Genomic_DNA"/>
</dbReference>
<dbReference type="EMBL" id="AY093044">
    <property type="protein sequence ID" value="AAM13043.1"/>
    <property type="molecule type" value="mRNA"/>
</dbReference>
<dbReference type="EMBL" id="AY128925">
    <property type="protein sequence ID" value="AAM91325.1"/>
    <property type="molecule type" value="mRNA"/>
</dbReference>
<dbReference type="RefSeq" id="NP_198467.2">
    <property type="nucleotide sequence ID" value="NM_123009.4"/>
</dbReference>
<dbReference type="SMR" id="Q8RWJ6"/>
<dbReference type="FunCoup" id="Q8RWJ6">
    <property type="interactions" value="794"/>
</dbReference>
<dbReference type="STRING" id="3702.Q8RWJ6"/>
<dbReference type="ESTHER" id="arath-Q9LVX9">
    <property type="family name" value="Carboxypeptidase_S10"/>
</dbReference>
<dbReference type="MEROPS" id="S10.A07"/>
<dbReference type="GlyCosmos" id="Q8RWJ6">
    <property type="glycosylation" value="3 sites, No reported glycans"/>
</dbReference>
<dbReference type="GlyGen" id="Q8RWJ6">
    <property type="glycosylation" value="3 sites"/>
</dbReference>
<dbReference type="PaxDb" id="3702-AT5G36180.1"/>
<dbReference type="EnsemblPlants" id="AT5G36180.1">
    <property type="protein sequence ID" value="AT5G36180.1"/>
    <property type="gene ID" value="AT5G36180"/>
</dbReference>
<dbReference type="GeneID" id="833615"/>
<dbReference type="Gramene" id="AT5G36180.1">
    <property type="protein sequence ID" value="AT5G36180.1"/>
    <property type="gene ID" value="AT5G36180"/>
</dbReference>
<dbReference type="KEGG" id="ath:AT5G36180"/>
<dbReference type="Araport" id="AT5G36180"/>
<dbReference type="TAIR" id="AT5G36180">
    <property type="gene designation" value="SCPL1"/>
</dbReference>
<dbReference type="eggNOG" id="KOG1282">
    <property type="taxonomic scope" value="Eukaryota"/>
</dbReference>
<dbReference type="HOGENOM" id="CLU_008523_0_1_1"/>
<dbReference type="InParanoid" id="Q8RWJ6"/>
<dbReference type="OMA" id="INMYTIS"/>
<dbReference type="PhylomeDB" id="Q8RWJ6"/>
<dbReference type="BioCyc" id="ARA:AT5G36180-MONOMER"/>
<dbReference type="PRO" id="PR:Q8RWJ6"/>
<dbReference type="Proteomes" id="UP000006548">
    <property type="component" value="Chromosome 5"/>
</dbReference>
<dbReference type="ExpressionAtlas" id="Q8RWJ6">
    <property type="expression patterns" value="baseline and differential"/>
</dbReference>
<dbReference type="GO" id="GO:0005576">
    <property type="term" value="C:extracellular region"/>
    <property type="evidence" value="ECO:0007669"/>
    <property type="project" value="UniProtKB-SubCell"/>
</dbReference>
<dbReference type="GO" id="GO:0004185">
    <property type="term" value="F:serine-type carboxypeptidase activity"/>
    <property type="evidence" value="ECO:0007669"/>
    <property type="project" value="InterPro"/>
</dbReference>
<dbReference type="GO" id="GO:0006508">
    <property type="term" value="P:proteolysis"/>
    <property type="evidence" value="ECO:0007669"/>
    <property type="project" value="UniProtKB-KW"/>
</dbReference>
<dbReference type="FunFam" id="3.40.50.12670:FF:000001">
    <property type="entry name" value="Carboxypeptidase"/>
    <property type="match status" value="1"/>
</dbReference>
<dbReference type="FunFam" id="3.40.50.1820:FF:000148">
    <property type="entry name" value="Serine carboxypeptidase-like 11"/>
    <property type="match status" value="1"/>
</dbReference>
<dbReference type="Gene3D" id="3.40.50.1820">
    <property type="entry name" value="alpha/beta hydrolase"/>
    <property type="match status" value="1"/>
</dbReference>
<dbReference type="InterPro" id="IPR029058">
    <property type="entry name" value="AB_hydrolase_fold"/>
</dbReference>
<dbReference type="InterPro" id="IPR001563">
    <property type="entry name" value="Peptidase_S10"/>
</dbReference>
<dbReference type="PANTHER" id="PTHR11802:SF457">
    <property type="entry name" value="SERINE CARBOXYPEPTIDASE-LIKE 1-RELATED"/>
    <property type="match status" value="1"/>
</dbReference>
<dbReference type="PANTHER" id="PTHR11802">
    <property type="entry name" value="SERINE PROTEASE FAMILY S10 SERINE CARBOXYPEPTIDASE"/>
    <property type="match status" value="1"/>
</dbReference>
<dbReference type="Pfam" id="PF00450">
    <property type="entry name" value="Peptidase_S10"/>
    <property type="match status" value="1"/>
</dbReference>
<dbReference type="PRINTS" id="PR00724">
    <property type="entry name" value="CRBOXYPTASEC"/>
</dbReference>
<dbReference type="SUPFAM" id="SSF53474">
    <property type="entry name" value="alpha/beta-Hydrolases"/>
    <property type="match status" value="1"/>
</dbReference>
<feature type="signal peptide" evidence="2">
    <location>
        <begin position="1"/>
        <end position="29"/>
    </location>
</feature>
<feature type="chain" id="PRO_0000274615" description="Serine carboxypeptidase-like 1">
    <location>
        <begin position="30"/>
        <end position="441"/>
    </location>
</feature>
<feature type="active site" evidence="1">
    <location>
        <position position="184"/>
    </location>
</feature>
<feature type="active site" evidence="1">
    <location>
        <position position="366"/>
    </location>
</feature>
<feature type="active site" evidence="1">
    <location>
        <position position="419"/>
    </location>
</feature>
<feature type="glycosylation site" description="N-linked (GlcNAc...) asparagine" evidence="2">
    <location>
        <position position="109"/>
    </location>
</feature>
<feature type="glycosylation site" description="N-linked (GlcNAc...) asparagine" evidence="2">
    <location>
        <position position="350"/>
    </location>
</feature>
<feature type="glycosylation site" description="N-linked (GlcNAc...) asparagine" evidence="2">
    <location>
        <position position="382"/>
    </location>
</feature>
<feature type="disulfide bond" evidence="1">
    <location>
        <begin position="88"/>
        <end position="331"/>
    </location>
</feature>
<feature type="disulfide bond" evidence="1">
    <location>
        <begin position="252"/>
        <end position="266"/>
    </location>
</feature>
<feature type="disulfide bond" evidence="1">
    <location>
        <begin position="290"/>
        <end position="297"/>
    </location>
</feature>
<accession>Q8RWJ6</accession>
<accession>Q9LVX9</accession>
<keyword id="KW-0121">Carboxypeptidase</keyword>
<keyword id="KW-1015">Disulfide bond</keyword>
<keyword id="KW-0325">Glycoprotein</keyword>
<keyword id="KW-0378">Hydrolase</keyword>
<keyword id="KW-0645">Protease</keyword>
<keyword id="KW-1185">Reference proteome</keyword>
<keyword id="KW-0964">Secreted</keyword>
<keyword id="KW-0732">Signal</keyword>